<gene>
    <name evidence="1" type="primary">ygfB</name>
    <name type="ordered locus">SEN2902</name>
</gene>
<sequence length="192" mass="21257">MSIQNEMPGYNEMNRFLNQQGAGLTPAEMHGLISGMICGGNNDSSWQPLLHDLTNEGLAFGHELAQALRKMHAATSDALEDDGFLFQLYLPEGDDVSVFDRADALAGWVNHFLLGLGVTQPKLDKVTGETGEAIDDLRNIAQLGYDESEDQEELEMSLEEIIEYVRVAALLCHDTFTRQQPTAPEVRKPTLH</sequence>
<dbReference type="EMBL" id="AM933172">
    <property type="protein sequence ID" value="CAR34480.1"/>
    <property type="molecule type" value="Genomic_DNA"/>
</dbReference>
<dbReference type="SMR" id="B5QXI6"/>
<dbReference type="KEGG" id="set:SEN2902"/>
<dbReference type="HOGENOM" id="CLU_085336_1_0_6"/>
<dbReference type="Proteomes" id="UP000000613">
    <property type="component" value="Chromosome"/>
</dbReference>
<dbReference type="GO" id="GO:0005829">
    <property type="term" value="C:cytosol"/>
    <property type="evidence" value="ECO:0007669"/>
    <property type="project" value="TreeGrafter"/>
</dbReference>
<dbReference type="FunFam" id="1.20.120.740:FF:000001">
    <property type="entry name" value="UPF0149 protein YgfB"/>
    <property type="match status" value="1"/>
</dbReference>
<dbReference type="Gene3D" id="1.20.120.740">
    <property type="entry name" value="YgfB uncharacterised protein family UPF0149, PF03695"/>
    <property type="match status" value="1"/>
</dbReference>
<dbReference type="HAMAP" id="MF_00346">
    <property type="entry name" value="UPF0149"/>
    <property type="match status" value="1"/>
</dbReference>
<dbReference type="InterPro" id="IPR011978">
    <property type="entry name" value="YgfB-like"/>
</dbReference>
<dbReference type="InterPro" id="IPR036255">
    <property type="entry name" value="YgfB-like_sf"/>
</dbReference>
<dbReference type="NCBIfam" id="NF002477">
    <property type="entry name" value="PRK01736.1"/>
    <property type="match status" value="1"/>
</dbReference>
<dbReference type="NCBIfam" id="TIGR02292">
    <property type="entry name" value="ygfB_yecA"/>
    <property type="match status" value="1"/>
</dbReference>
<dbReference type="PANTHER" id="PTHR37528">
    <property type="entry name" value="UPF0149 PROTEIN YGFB"/>
    <property type="match status" value="1"/>
</dbReference>
<dbReference type="PANTHER" id="PTHR37528:SF1">
    <property type="entry name" value="UPF0149 PROTEIN YGFB"/>
    <property type="match status" value="1"/>
</dbReference>
<dbReference type="Pfam" id="PF03695">
    <property type="entry name" value="UPF0149"/>
    <property type="match status" value="1"/>
</dbReference>
<dbReference type="SUPFAM" id="SSF101327">
    <property type="entry name" value="YgfB-like"/>
    <property type="match status" value="1"/>
</dbReference>
<protein>
    <recommendedName>
        <fullName evidence="1">UPF0149 protein YgfB</fullName>
    </recommendedName>
</protein>
<reference key="1">
    <citation type="journal article" date="2008" name="Genome Res.">
        <title>Comparative genome analysis of Salmonella enteritidis PT4 and Salmonella gallinarum 287/91 provides insights into evolutionary and host adaptation pathways.</title>
        <authorList>
            <person name="Thomson N.R."/>
            <person name="Clayton D.J."/>
            <person name="Windhorst D."/>
            <person name="Vernikos G."/>
            <person name="Davidson S."/>
            <person name="Churcher C."/>
            <person name="Quail M.A."/>
            <person name="Stevens M."/>
            <person name="Jones M.A."/>
            <person name="Watson M."/>
            <person name="Barron A."/>
            <person name="Layton A."/>
            <person name="Pickard D."/>
            <person name="Kingsley R.A."/>
            <person name="Bignell A."/>
            <person name="Clark L."/>
            <person name="Harris B."/>
            <person name="Ormond D."/>
            <person name="Abdellah Z."/>
            <person name="Brooks K."/>
            <person name="Cherevach I."/>
            <person name="Chillingworth T."/>
            <person name="Woodward J."/>
            <person name="Norberczak H."/>
            <person name="Lord A."/>
            <person name="Arrowsmith C."/>
            <person name="Jagels K."/>
            <person name="Moule S."/>
            <person name="Mungall K."/>
            <person name="Saunders M."/>
            <person name="Whitehead S."/>
            <person name="Chabalgoity J.A."/>
            <person name="Maskell D."/>
            <person name="Humphreys T."/>
            <person name="Roberts M."/>
            <person name="Barrow P.A."/>
            <person name="Dougan G."/>
            <person name="Parkhill J."/>
        </authorList>
    </citation>
    <scope>NUCLEOTIDE SEQUENCE [LARGE SCALE GENOMIC DNA]</scope>
    <source>
        <strain>P125109</strain>
    </source>
</reference>
<accession>B5QXI6</accession>
<proteinExistence type="inferred from homology"/>
<evidence type="ECO:0000255" key="1">
    <source>
        <dbReference type="HAMAP-Rule" id="MF_00346"/>
    </source>
</evidence>
<comment type="similarity">
    <text evidence="1">Belongs to the UPF0149 family.</text>
</comment>
<organism>
    <name type="scientific">Salmonella enteritidis PT4 (strain P125109)</name>
    <dbReference type="NCBI Taxonomy" id="550537"/>
    <lineage>
        <taxon>Bacteria</taxon>
        <taxon>Pseudomonadati</taxon>
        <taxon>Pseudomonadota</taxon>
        <taxon>Gammaproteobacteria</taxon>
        <taxon>Enterobacterales</taxon>
        <taxon>Enterobacteriaceae</taxon>
        <taxon>Salmonella</taxon>
    </lineage>
</organism>
<name>YGFB_SALEP</name>
<feature type="chain" id="PRO_1000120480" description="UPF0149 protein YgfB">
    <location>
        <begin position="1"/>
        <end position="192"/>
    </location>
</feature>